<gene>
    <name type="ordered locus">Os10g0503700</name>
    <name type="ordered locus">LOC_Os10g35990</name>
    <name type="ORF">OsJ_32082</name>
    <name type="ORF">OSJNBb0073N24.12</name>
</gene>
<reference key="1">
    <citation type="journal article" date="2003" name="Science">
        <title>In-depth view of structure, activity, and evolution of rice chromosome 10.</title>
        <authorList>
            <person name="Yu Y."/>
            <person name="Rambo T."/>
            <person name="Currie J."/>
            <person name="Saski C."/>
            <person name="Kim H.-R."/>
            <person name="Collura K."/>
            <person name="Thompson S."/>
            <person name="Simmons J."/>
            <person name="Yang T.-J."/>
            <person name="Nah G."/>
            <person name="Patel A.J."/>
            <person name="Thurmond S."/>
            <person name="Henry D."/>
            <person name="Oates R."/>
            <person name="Palmer M."/>
            <person name="Pries G."/>
            <person name="Gibson J."/>
            <person name="Anderson H."/>
            <person name="Paradkar M."/>
            <person name="Crane L."/>
            <person name="Dale J."/>
            <person name="Carver M.B."/>
            <person name="Wood T."/>
            <person name="Frisch D."/>
            <person name="Engler F."/>
            <person name="Soderlund C."/>
            <person name="Palmer L.E."/>
            <person name="Teytelman L."/>
            <person name="Nascimento L."/>
            <person name="De la Bastide M."/>
            <person name="Spiegel L."/>
            <person name="Ware D."/>
            <person name="O'Shaughnessy A."/>
            <person name="Dike S."/>
            <person name="Dedhia N."/>
            <person name="Preston R."/>
            <person name="Huang E."/>
            <person name="Ferraro K."/>
            <person name="Kuit K."/>
            <person name="Miller B."/>
            <person name="Zutavern T."/>
            <person name="Katzenberger F."/>
            <person name="Muller S."/>
            <person name="Balija V."/>
            <person name="Martienssen R.A."/>
            <person name="Stein L."/>
            <person name="Minx P."/>
            <person name="Johnson D."/>
            <person name="Cordum H."/>
            <person name="Mardis E."/>
            <person name="Cheng Z."/>
            <person name="Jiang J."/>
            <person name="Wilson R."/>
            <person name="McCombie W.R."/>
            <person name="Wing R.A."/>
            <person name="Yuan Q."/>
            <person name="Ouyang S."/>
            <person name="Liu J."/>
            <person name="Jones K.M."/>
            <person name="Gansberger K."/>
            <person name="Moffat K."/>
            <person name="Hill J."/>
            <person name="Tsitrin T."/>
            <person name="Overton L."/>
            <person name="Bera J."/>
            <person name="Kim M."/>
            <person name="Jin S."/>
            <person name="Tallon L."/>
            <person name="Ciecko A."/>
            <person name="Pai G."/>
            <person name="Van Aken S."/>
            <person name="Utterback T."/>
            <person name="Reidmuller S."/>
            <person name="Bormann J."/>
            <person name="Feldblyum T."/>
            <person name="Hsiao J."/>
            <person name="Zismann V."/>
            <person name="Blunt S."/>
            <person name="de Vazeille A.R."/>
            <person name="Shaffer T."/>
            <person name="Koo H."/>
            <person name="Suh B."/>
            <person name="Yang Q."/>
            <person name="Haas B."/>
            <person name="Peterson J."/>
            <person name="Pertea M."/>
            <person name="Volfovsky N."/>
            <person name="Wortman J."/>
            <person name="White O."/>
            <person name="Salzberg S.L."/>
            <person name="Fraser C.M."/>
            <person name="Buell C.R."/>
            <person name="Messing J."/>
            <person name="Song R."/>
            <person name="Fuks G."/>
            <person name="Llaca V."/>
            <person name="Kovchak S."/>
            <person name="Young S."/>
            <person name="Bowers J.E."/>
            <person name="Paterson A.H."/>
            <person name="Johns M.A."/>
            <person name="Mao L."/>
            <person name="Pan H."/>
            <person name="Dean R.A."/>
        </authorList>
    </citation>
    <scope>NUCLEOTIDE SEQUENCE [LARGE SCALE GENOMIC DNA]</scope>
    <source>
        <strain>cv. Nipponbare</strain>
    </source>
</reference>
<reference key="2">
    <citation type="journal article" date="2005" name="Nature">
        <title>The map-based sequence of the rice genome.</title>
        <authorList>
            <consortium name="International rice genome sequencing project (IRGSP)"/>
        </authorList>
    </citation>
    <scope>NUCLEOTIDE SEQUENCE [LARGE SCALE GENOMIC DNA]</scope>
    <source>
        <strain>cv. Nipponbare</strain>
    </source>
</reference>
<reference key="3">
    <citation type="journal article" date="2008" name="Nucleic Acids Res.">
        <title>The rice annotation project database (RAP-DB): 2008 update.</title>
        <authorList>
            <consortium name="The rice annotation project (RAP)"/>
        </authorList>
    </citation>
    <scope>GENOME REANNOTATION</scope>
    <source>
        <strain>cv. Nipponbare</strain>
    </source>
</reference>
<reference key="4">
    <citation type="journal article" date="2013" name="Rice">
        <title>Improvement of the Oryza sativa Nipponbare reference genome using next generation sequence and optical map data.</title>
        <authorList>
            <person name="Kawahara Y."/>
            <person name="de la Bastide M."/>
            <person name="Hamilton J.P."/>
            <person name="Kanamori H."/>
            <person name="McCombie W.R."/>
            <person name="Ouyang S."/>
            <person name="Schwartz D.C."/>
            <person name="Tanaka T."/>
            <person name="Wu J."/>
            <person name="Zhou S."/>
            <person name="Childs K.L."/>
            <person name="Davidson R.M."/>
            <person name="Lin H."/>
            <person name="Quesada-Ocampo L."/>
            <person name="Vaillancourt B."/>
            <person name="Sakai H."/>
            <person name="Lee S.S."/>
            <person name="Kim J."/>
            <person name="Numa H."/>
            <person name="Itoh T."/>
            <person name="Buell C.R."/>
            <person name="Matsumoto T."/>
        </authorList>
    </citation>
    <scope>GENOME REANNOTATION</scope>
    <source>
        <strain>cv. Nipponbare</strain>
    </source>
</reference>
<reference key="5">
    <citation type="journal article" date="2005" name="PLoS Biol.">
        <title>The genomes of Oryza sativa: a history of duplications.</title>
        <authorList>
            <person name="Yu J."/>
            <person name="Wang J."/>
            <person name="Lin W."/>
            <person name="Li S."/>
            <person name="Li H."/>
            <person name="Zhou J."/>
            <person name="Ni P."/>
            <person name="Dong W."/>
            <person name="Hu S."/>
            <person name="Zeng C."/>
            <person name="Zhang J."/>
            <person name="Zhang Y."/>
            <person name="Li R."/>
            <person name="Xu Z."/>
            <person name="Li S."/>
            <person name="Li X."/>
            <person name="Zheng H."/>
            <person name="Cong L."/>
            <person name="Lin L."/>
            <person name="Yin J."/>
            <person name="Geng J."/>
            <person name="Li G."/>
            <person name="Shi J."/>
            <person name="Liu J."/>
            <person name="Lv H."/>
            <person name="Li J."/>
            <person name="Wang J."/>
            <person name="Deng Y."/>
            <person name="Ran L."/>
            <person name="Shi X."/>
            <person name="Wang X."/>
            <person name="Wu Q."/>
            <person name="Li C."/>
            <person name="Ren X."/>
            <person name="Wang J."/>
            <person name="Wang X."/>
            <person name="Li D."/>
            <person name="Liu D."/>
            <person name="Zhang X."/>
            <person name="Ji Z."/>
            <person name="Zhao W."/>
            <person name="Sun Y."/>
            <person name="Zhang Z."/>
            <person name="Bao J."/>
            <person name="Han Y."/>
            <person name="Dong L."/>
            <person name="Ji J."/>
            <person name="Chen P."/>
            <person name="Wu S."/>
            <person name="Liu J."/>
            <person name="Xiao Y."/>
            <person name="Bu D."/>
            <person name="Tan J."/>
            <person name="Yang L."/>
            <person name="Ye C."/>
            <person name="Zhang J."/>
            <person name="Xu J."/>
            <person name="Zhou Y."/>
            <person name="Yu Y."/>
            <person name="Zhang B."/>
            <person name="Zhuang S."/>
            <person name="Wei H."/>
            <person name="Liu B."/>
            <person name="Lei M."/>
            <person name="Yu H."/>
            <person name="Li Y."/>
            <person name="Xu H."/>
            <person name="Wei S."/>
            <person name="He X."/>
            <person name="Fang L."/>
            <person name="Zhang Z."/>
            <person name="Zhang Y."/>
            <person name="Huang X."/>
            <person name="Su Z."/>
            <person name="Tong W."/>
            <person name="Li J."/>
            <person name="Tong Z."/>
            <person name="Li S."/>
            <person name="Ye J."/>
            <person name="Wang L."/>
            <person name="Fang L."/>
            <person name="Lei T."/>
            <person name="Chen C.-S."/>
            <person name="Chen H.-C."/>
            <person name="Xu Z."/>
            <person name="Li H."/>
            <person name="Huang H."/>
            <person name="Zhang F."/>
            <person name="Xu H."/>
            <person name="Li N."/>
            <person name="Zhao C."/>
            <person name="Li S."/>
            <person name="Dong L."/>
            <person name="Huang Y."/>
            <person name="Li L."/>
            <person name="Xi Y."/>
            <person name="Qi Q."/>
            <person name="Li W."/>
            <person name="Zhang B."/>
            <person name="Hu W."/>
            <person name="Zhang Y."/>
            <person name="Tian X."/>
            <person name="Jiao Y."/>
            <person name="Liang X."/>
            <person name="Jin J."/>
            <person name="Gao L."/>
            <person name="Zheng W."/>
            <person name="Hao B."/>
            <person name="Liu S.-M."/>
            <person name="Wang W."/>
            <person name="Yuan L."/>
            <person name="Cao M."/>
            <person name="McDermott J."/>
            <person name="Samudrala R."/>
            <person name="Wang J."/>
            <person name="Wong G.K.-S."/>
            <person name="Yang H."/>
        </authorList>
    </citation>
    <scope>NUCLEOTIDE SEQUENCE [LARGE SCALE GENOMIC DNA]</scope>
    <source>
        <strain>cv. Nipponbare</strain>
    </source>
</reference>
<reference key="6">
    <citation type="journal article" date="2003" name="Science">
        <title>Collection, mapping, and annotation of over 28,000 cDNA clones from japonica rice.</title>
        <authorList>
            <consortium name="The rice full-length cDNA consortium"/>
        </authorList>
    </citation>
    <scope>NUCLEOTIDE SEQUENCE [LARGE SCALE MRNA]</scope>
    <source>
        <strain>cv. Nipponbare</strain>
    </source>
</reference>
<accession>Q109G2</accession>
<accession>A0A0P0XWK1</accession>
<accession>B7ELN4</accession>
<accession>Q109G3</accession>
<accession>Q337E8</accession>
<accession>Q53RP3</accession>
<accession>Q9FVY5</accession>
<sequence>MHHPRARYPPGYTSGGGGGGGGGGGGGRGNGGGGFGGGGGGGGGNHGYYGRGPQPQPQQQHYHHQAQQLHQHQQQQQHAQRNSSSQQQQWLRRDQATAAAASGEVAARTAAQLEAVDSSSEDWKAQLNLPAPDTRYRTEDVTATKGNEFEDYFLKRELLMGIYEKGFERPSPIQEESIPIALTGSDILARAKNGTGKTAAFCIPALEKIDPEKNAIQVVILVPTRELALQTSQVCKELGKYLNIQVMVSTGGTSLKDDIMRLYQPVHLLVGTPGRILDLTRKGICVLKDCSMLVMDEADKLLAPEFQPSIEQLIHFLPANRQLLMFSATFPVTVKDFKEKYLPRPYVINLMDELTLKGITQYYAFVEERQKVHCLNTLFSKLQINQSIIFCNSVNRVELLAKKITELGYSCFYIHAKMLQDHRNRVFHDFRNGACRNLVCTDLFTRGIDIQAVNVVINFDFPKTSETYLHRVGRSGRFGHLGLAVNLITYEDRFNLYRIEQELGTEIKTIPPQIDLAVYCQ</sequence>
<comment type="function">
    <text evidence="1">ATP-dependent RNA helicase involved in mRNA turnover, and more specifically in mRNA decapping.</text>
</comment>
<comment type="catalytic activity">
    <reaction>
        <text>ATP + H2O = ADP + phosphate + H(+)</text>
        <dbReference type="Rhea" id="RHEA:13065"/>
        <dbReference type="ChEBI" id="CHEBI:15377"/>
        <dbReference type="ChEBI" id="CHEBI:15378"/>
        <dbReference type="ChEBI" id="CHEBI:30616"/>
        <dbReference type="ChEBI" id="CHEBI:43474"/>
        <dbReference type="ChEBI" id="CHEBI:456216"/>
        <dbReference type="EC" id="3.6.4.13"/>
    </reaction>
</comment>
<comment type="subcellular location">
    <subcellularLocation>
        <location evidence="1">Cytoplasm</location>
        <location evidence="1">P-body</location>
    </subcellularLocation>
    <text evidence="1">Is concentrated in several cytoplasmic foci called P bodies (or cytoplasmic processing bodies) which represent sites of mRNA decapping and 5' to 3' exonucleotidic decay.</text>
</comment>
<comment type="domain">
    <text>The Q motif is unique to and characteristic of the DEAD box family of RNA helicases and controls ATP binding and hydrolysis.</text>
</comment>
<comment type="similarity">
    <text evidence="5">Belongs to the DEAD box helicase family. DDX6/DHH1 subfamily.</text>
</comment>
<comment type="sequence caution" evidence="5">
    <conflict type="erroneous gene model prediction">
        <sequence resource="EMBL-CDS" id="AAX95709"/>
    </conflict>
</comment>
<comment type="sequence caution" evidence="5">
    <conflict type="erroneous gene model prediction">
        <sequence resource="EMBL-CDS" id="ABG66172"/>
    </conflict>
</comment>
<comment type="sequence caution" evidence="5">
    <conflict type="erroneous gene model prediction">
        <sequence resource="EMBL-CDS" id="ABG66173"/>
    </conflict>
</comment>
<protein>
    <recommendedName>
        <fullName>DEAD-box ATP-dependent RNA helicase 12</fullName>
        <ecNumber>3.6.4.13</ecNumber>
    </recommendedName>
</protein>
<keyword id="KW-0067">ATP-binding</keyword>
<keyword id="KW-0963">Cytoplasm</keyword>
<keyword id="KW-0347">Helicase</keyword>
<keyword id="KW-0378">Hydrolase</keyword>
<keyword id="KW-0507">mRNA processing</keyword>
<keyword id="KW-0509">mRNA transport</keyword>
<keyword id="KW-0547">Nucleotide-binding</keyword>
<keyword id="KW-1185">Reference proteome</keyword>
<keyword id="KW-0694">RNA-binding</keyword>
<keyword id="KW-0810">Translation regulation</keyword>
<keyword id="KW-0813">Transport</keyword>
<feature type="chain" id="PRO_0000282460" description="DEAD-box ATP-dependent RNA helicase 12">
    <location>
        <begin position="1"/>
        <end position="521"/>
    </location>
</feature>
<feature type="domain" description="Helicase ATP-binding" evidence="2">
    <location>
        <begin position="178"/>
        <end position="348"/>
    </location>
</feature>
<feature type="domain" description="Helicase C-terminal" evidence="3">
    <location>
        <begin position="358"/>
        <end position="518"/>
    </location>
</feature>
<feature type="region of interest" description="Disordered" evidence="4">
    <location>
        <begin position="1"/>
        <end position="97"/>
    </location>
</feature>
<feature type="short sequence motif" description="Q motif">
    <location>
        <begin position="147"/>
        <end position="175"/>
    </location>
</feature>
<feature type="short sequence motif" description="DEAD box">
    <location>
        <begin position="296"/>
        <end position="299"/>
    </location>
</feature>
<feature type="compositionally biased region" description="Gly residues" evidence="4">
    <location>
        <begin position="13"/>
        <end position="50"/>
    </location>
</feature>
<feature type="compositionally biased region" description="Low complexity" evidence="4">
    <location>
        <begin position="51"/>
        <end position="89"/>
    </location>
</feature>
<feature type="binding site" evidence="2">
    <location>
        <begin position="191"/>
        <end position="198"/>
    </location>
    <ligand>
        <name>ATP</name>
        <dbReference type="ChEBI" id="CHEBI:30616"/>
    </ligand>
</feature>
<feature type="sequence conflict" description="In Ref. 1; AAX95709 and 2; BAF26914." evidence="5" ref="1 2">
    <original>S</original>
    <variation>L</variation>
    <location>
        <position position="380"/>
    </location>
</feature>
<feature type="sequence conflict" description="In Ref. 1; AAX95709 and 2; BAF26914." evidence="5" ref="1 2">
    <original>D</original>
    <variation>G</variation>
    <location>
        <position position="449"/>
    </location>
</feature>
<dbReference type="EC" id="3.6.4.13"/>
<dbReference type="EMBL" id="AC078840">
    <property type="protein sequence ID" value="AAG13612.1"/>
    <property type="molecule type" value="Genomic_DNA"/>
</dbReference>
<dbReference type="EMBL" id="AC084023">
    <property type="protein sequence ID" value="AAX95709.1"/>
    <property type="status" value="ALT_SEQ"/>
    <property type="molecule type" value="Genomic_DNA"/>
</dbReference>
<dbReference type="EMBL" id="DP000086">
    <property type="protein sequence ID" value="ABB47852.2"/>
    <property type="molecule type" value="Genomic_DNA"/>
</dbReference>
<dbReference type="EMBL" id="DP000086">
    <property type="protein sequence ID" value="ABG66172.1"/>
    <property type="status" value="ALT_SEQ"/>
    <property type="molecule type" value="Genomic_DNA"/>
</dbReference>
<dbReference type="EMBL" id="DP000086">
    <property type="protein sequence ID" value="ABG66173.1"/>
    <property type="status" value="ALT_SEQ"/>
    <property type="molecule type" value="Genomic_DNA"/>
</dbReference>
<dbReference type="EMBL" id="AP008216">
    <property type="protein sequence ID" value="BAF26914.2"/>
    <property type="molecule type" value="Genomic_DNA"/>
</dbReference>
<dbReference type="EMBL" id="AP014966">
    <property type="protein sequence ID" value="BAT11553.1"/>
    <property type="molecule type" value="Genomic_DNA"/>
</dbReference>
<dbReference type="EMBL" id="CM000147">
    <property type="protein sequence ID" value="EEE51233.1"/>
    <property type="molecule type" value="Genomic_DNA"/>
</dbReference>
<dbReference type="EMBL" id="AK073085">
    <property type="protein sequence ID" value="BAG93281.1"/>
    <property type="molecule type" value="mRNA"/>
</dbReference>
<dbReference type="RefSeq" id="XP_015614831.1">
    <property type="nucleotide sequence ID" value="XM_015759345.1"/>
</dbReference>
<dbReference type="SMR" id="Q109G2"/>
<dbReference type="FunCoup" id="Q109G2">
    <property type="interactions" value="2407"/>
</dbReference>
<dbReference type="STRING" id="39947.Q109G2"/>
<dbReference type="PaxDb" id="39947-Q109G2"/>
<dbReference type="EnsemblPlants" id="Os10t0503700-01">
    <property type="protein sequence ID" value="Os10t0503700-01"/>
    <property type="gene ID" value="Os10g0503700"/>
</dbReference>
<dbReference type="Gramene" id="Os10t0503700-01">
    <property type="protein sequence ID" value="Os10t0503700-01"/>
    <property type="gene ID" value="Os10g0503700"/>
</dbReference>
<dbReference type="KEGG" id="dosa:Os10g0503700"/>
<dbReference type="eggNOG" id="KOG0326">
    <property type="taxonomic scope" value="Eukaryota"/>
</dbReference>
<dbReference type="HOGENOM" id="CLU_003041_30_0_1"/>
<dbReference type="InParanoid" id="Q109G2"/>
<dbReference type="OMA" id="RYPPGYT"/>
<dbReference type="OrthoDB" id="10265785at2759"/>
<dbReference type="Proteomes" id="UP000000763">
    <property type="component" value="Chromosome 10"/>
</dbReference>
<dbReference type="Proteomes" id="UP000007752">
    <property type="component" value="Chromosome 10"/>
</dbReference>
<dbReference type="Proteomes" id="UP000059680">
    <property type="component" value="Chromosome 10"/>
</dbReference>
<dbReference type="ExpressionAtlas" id="Q109G2">
    <property type="expression patterns" value="baseline and differential"/>
</dbReference>
<dbReference type="GO" id="GO:0010494">
    <property type="term" value="C:cytoplasmic stress granule"/>
    <property type="evidence" value="ECO:0000318"/>
    <property type="project" value="GO_Central"/>
</dbReference>
<dbReference type="GO" id="GO:0000932">
    <property type="term" value="C:P-body"/>
    <property type="evidence" value="ECO:0000318"/>
    <property type="project" value="GO_Central"/>
</dbReference>
<dbReference type="GO" id="GO:0005524">
    <property type="term" value="F:ATP binding"/>
    <property type="evidence" value="ECO:0007669"/>
    <property type="project" value="UniProtKB-KW"/>
</dbReference>
<dbReference type="GO" id="GO:0016887">
    <property type="term" value="F:ATP hydrolysis activity"/>
    <property type="evidence" value="ECO:0007669"/>
    <property type="project" value="RHEA"/>
</dbReference>
<dbReference type="GO" id="GO:0003729">
    <property type="term" value="F:mRNA binding"/>
    <property type="evidence" value="ECO:0000318"/>
    <property type="project" value="GO_Central"/>
</dbReference>
<dbReference type="GO" id="GO:0003724">
    <property type="term" value="F:RNA helicase activity"/>
    <property type="evidence" value="ECO:0007669"/>
    <property type="project" value="UniProtKB-EC"/>
</dbReference>
<dbReference type="GO" id="GO:0006397">
    <property type="term" value="P:mRNA processing"/>
    <property type="evidence" value="ECO:0007669"/>
    <property type="project" value="UniProtKB-KW"/>
</dbReference>
<dbReference type="GO" id="GO:0051028">
    <property type="term" value="P:mRNA transport"/>
    <property type="evidence" value="ECO:0007669"/>
    <property type="project" value="UniProtKB-KW"/>
</dbReference>
<dbReference type="GO" id="GO:0017148">
    <property type="term" value="P:negative regulation of translation"/>
    <property type="evidence" value="ECO:0000318"/>
    <property type="project" value="GO_Central"/>
</dbReference>
<dbReference type="GO" id="GO:0033962">
    <property type="term" value="P:P-body assembly"/>
    <property type="evidence" value="ECO:0000318"/>
    <property type="project" value="GO_Central"/>
</dbReference>
<dbReference type="GO" id="GO:0034063">
    <property type="term" value="P:stress granule assembly"/>
    <property type="evidence" value="ECO:0000318"/>
    <property type="project" value="GO_Central"/>
</dbReference>
<dbReference type="CDD" id="cd17940">
    <property type="entry name" value="DEADc_DDX6"/>
    <property type="match status" value="1"/>
</dbReference>
<dbReference type="CDD" id="cd18787">
    <property type="entry name" value="SF2_C_DEAD"/>
    <property type="match status" value="1"/>
</dbReference>
<dbReference type="FunFam" id="3.40.50.300:FF:000114">
    <property type="entry name" value="ATP-dependent RNA helicase DDX6"/>
    <property type="match status" value="1"/>
</dbReference>
<dbReference type="FunFam" id="3.40.50.300:FF:000364">
    <property type="entry name" value="ATP-dependent RNA helicase DDX6"/>
    <property type="match status" value="1"/>
</dbReference>
<dbReference type="Gene3D" id="3.40.50.300">
    <property type="entry name" value="P-loop containing nucleotide triphosphate hydrolases"/>
    <property type="match status" value="2"/>
</dbReference>
<dbReference type="InterPro" id="IPR011545">
    <property type="entry name" value="DEAD/DEAH_box_helicase_dom"/>
</dbReference>
<dbReference type="InterPro" id="IPR014001">
    <property type="entry name" value="Helicase_ATP-bd"/>
</dbReference>
<dbReference type="InterPro" id="IPR001650">
    <property type="entry name" value="Helicase_C-like"/>
</dbReference>
<dbReference type="InterPro" id="IPR027417">
    <property type="entry name" value="P-loop_NTPase"/>
</dbReference>
<dbReference type="InterPro" id="IPR000629">
    <property type="entry name" value="RNA-helicase_DEAD-box_CS"/>
</dbReference>
<dbReference type="InterPro" id="IPR014014">
    <property type="entry name" value="RNA_helicase_DEAD_Q_motif"/>
</dbReference>
<dbReference type="PANTHER" id="PTHR47960">
    <property type="entry name" value="DEAD-BOX ATP-DEPENDENT RNA HELICASE 50"/>
    <property type="match status" value="1"/>
</dbReference>
<dbReference type="Pfam" id="PF00270">
    <property type="entry name" value="DEAD"/>
    <property type="match status" value="1"/>
</dbReference>
<dbReference type="Pfam" id="PF00271">
    <property type="entry name" value="Helicase_C"/>
    <property type="match status" value="1"/>
</dbReference>
<dbReference type="SMART" id="SM00487">
    <property type="entry name" value="DEXDc"/>
    <property type="match status" value="1"/>
</dbReference>
<dbReference type="SMART" id="SM00490">
    <property type="entry name" value="HELICc"/>
    <property type="match status" value="1"/>
</dbReference>
<dbReference type="SUPFAM" id="SSF81995">
    <property type="entry name" value="beta-sandwich domain of Sec23/24"/>
    <property type="match status" value="1"/>
</dbReference>
<dbReference type="SUPFAM" id="SSF52540">
    <property type="entry name" value="P-loop containing nucleoside triphosphate hydrolases"/>
    <property type="match status" value="1"/>
</dbReference>
<dbReference type="PROSITE" id="PS00039">
    <property type="entry name" value="DEAD_ATP_HELICASE"/>
    <property type="match status" value="1"/>
</dbReference>
<dbReference type="PROSITE" id="PS51192">
    <property type="entry name" value="HELICASE_ATP_BIND_1"/>
    <property type="match status" value="1"/>
</dbReference>
<dbReference type="PROSITE" id="PS51194">
    <property type="entry name" value="HELICASE_CTER"/>
    <property type="match status" value="1"/>
</dbReference>
<dbReference type="PROSITE" id="PS51195">
    <property type="entry name" value="Q_MOTIF"/>
    <property type="match status" value="1"/>
</dbReference>
<proteinExistence type="evidence at transcript level"/>
<organism>
    <name type="scientific">Oryza sativa subsp. japonica</name>
    <name type="common">Rice</name>
    <dbReference type="NCBI Taxonomy" id="39947"/>
    <lineage>
        <taxon>Eukaryota</taxon>
        <taxon>Viridiplantae</taxon>
        <taxon>Streptophyta</taxon>
        <taxon>Embryophyta</taxon>
        <taxon>Tracheophyta</taxon>
        <taxon>Spermatophyta</taxon>
        <taxon>Magnoliopsida</taxon>
        <taxon>Liliopsida</taxon>
        <taxon>Poales</taxon>
        <taxon>Poaceae</taxon>
        <taxon>BOP clade</taxon>
        <taxon>Oryzoideae</taxon>
        <taxon>Oryzeae</taxon>
        <taxon>Oryzinae</taxon>
        <taxon>Oryza</taxon>
        <taxon>Oryza sativa</taxon>
    </lineage>
</organism>
<name>RH12_ORYSJ</name>
<evidence type="ECO:0000250" key="1"/>
<evidence type="ECO:0000255" key="2">
    <source>
        <dbReference type="PROSITE-ProRule" id="PRU00541"/>
    </source>
</evidence>
<evidence type="ECO:0000255" key="3">
    <source>
        <dbReference type="PROSITE-ProRule" id="PRU00542"/>
    </source>
</evidence>
<evidence type="ECO:0000256" key="4">
    <source>
        <dbReference type="SAM" id="MobiDB-lite"/>
    </source>
</evidence>
<evidence type="ECO:0000305" key="5"/>